<name>LIPA_YERPB</name>
<accession>B2K874</accession>
<organism>
    <name type="scientific">Yersinia pseudotuberculosis serotype IB (strain PB1/+)</name>
    <dbReference type="NCBI Taxonomy" id="502801"/>
    <lineage>
        <taxon>Bacteria</taxon>
        <taxon>Pseudomonadati</taxon>
        <taxon>Pseudomonadota</taxon>
        <taxon>Gammaproteobacteria</taxon>
        <taxon>Enterobacterales</taxon>
        <taxon>Yersiniaceae</taxon>
        <taxon>Yersinia</taxon>
    </lineage>
</organism>
<evidence type="ECO:0000255" key="1">
    <source>
        <dbReference type="HAMAP-Rule" id="MF_00206"/>
    </source>
</evidence>
<evidence type="ECO:0000255" key="2">
    <source>
        <dbReference type="PROSITE-ProRule" id="PRU01266"/>
    </source>
</evidence>
<feature type="chain" id="PRO_1000099646" description="Lipoyl synthase">
    <location>
        <begin position="1"/>
        <end position="321"/>
    </location>
</feature>
<feature type="domain" description="Radical SAM core" evidence="2">
    <location>
        <begin position="80"/>
        <end position="297"/>
    </location>
</feature>
<feature type="binding site" evidence="1">
    <location>
        <position position="68"/>
    </location>
    <ligand>
        <name>[4Fe-4S] cluster</name>
        <dbReference type="ChEBI" id="CHEBI:49883"/>
        <label>1</label>
    </ligand>
</feature>
<feature type="binding site" evidence="1">
    <location>
        <position position="73"/>
    </location>
    <ligand>
        <name>[4Fe-4S] cluster</name>
        <dbReference type="ChEBI" id="CHEBI:49883"/>
        <label>1</label>
    </ligand>
</feature>
<feature type="binding site" evidence="1">
    <location>
        <position position="79"/>
    </location>
    <ligand>
        <name>[4Fe-4S] cluster</name>
        <dbReference type="ChEBI" id="CHEBI:49883"/>
        <label>1</label>
    </ligand>
</feature>
<feature type="binding site" evidence="1">
    <location>
        <position position="94"/>
    </location>
    <ligand>
        <name>[4Fe-4S] cluster</name>
        <dbReference type="ChEBI" id="CHEBI:49883"/>
        <label>2</label>
        <note>4Fe-4S-S-AdoMet</note>
    </ligand>
</feature>
<feature type="binding site" evidence="1">
    <location>
        <position position="98"/>
    </location>
    <ligand>
        <name>[4Fe-4S] cluster</name>
        <dbReference type="ChEBI" id="CHEBI:49883"/>
        <label>2</label>
        <note>4Fe-4S-S-AdoMet</note>
    </ligand>
</feature>
<feature type="binding site" evidence="1">
    <location>
        <position position="101"/>
    </location>
    <ligand>
        <name>[4Fe-4S] cluster</name>
        <dbReference type="ChEBI" id="CHEBI:49883"/>
        <label>2</label>
        <note>4Fe-4S-S-AdoMet</note>
    </ligand>
</feature>
<feature type="binding site" evidence="1">
    <location>
        <position position="308"/>
    </location>
    <ligand>
        <name>[4Fe-4S] cluster</name>
        <dbReference type="ChEBI" id="CHEBI:49883"/>
        <label>1</label>
    </ligand>
</feature>
<sequence length="321" mass="36086">MSKPIQMERGVKYRDADKMALIPVKNVVTERQELLRKPEWLKIKLPTDSSRIQGIKAAMRKNGLHSVCEEASCPNLSECFNHGTATFMILGAICTRRCPFCDVAHGRPVTPDANEPEKLAQTIQDMGLRYVVITSVDRDDLRDGGAQHFADCISAIRAKNPTIKIETLVPDFRGRMDRALDILTATPPDVFNHNLENVPRVYRQVRPGANYDWSLKLLERFKEAHPDIPTKSGLMVGLGETNAEIVEVMHDLRRHGVTMLTLGQYLQPSRHHLPVQRYVSPAEFDEMKAEAMAMGFTHAACGPFVRSSYHADLQAKGMEVK</sequence>
<comment type="function">
    <text evidence="1">Catalyzes the radical-mediated insertion of two sulfur atoms into the C-6 and C-8 positions of the octanoyl moiety bound to the lipoyl domains of lipoate-dependent enzymes, thereby converting the octanoylated domains into lipoylated derivatives.</text>
</comment>
<comment type="catalytic activity">
    <reaction evidence="1">
        <text>[[Fe-S] cluster scaffold protein carrying a second [4Fe-4S](2+) cluster] + N(6)-octanoyl-L-lysyl-[protein] + 2 oxidized [2Fe-2S]-[ferredoxin] + 2 S-adenosyl-L-methionine + 4 H(+) = [[Fe-S] cluster scaffold protein] + N(6)-[(R)-dihydrolipoyl]-L-lysyl-[protein] + 4 Fe(3+) + 2 hydrogen sulfide + 2 5'-deoxyadenosine + 2 L-methionine + 2 reduced [2Fe-2S]-[ferredoxin]</text>
        <dbReference type="Rhea" id="RHEA:16585"/>
        <dbReference type="Rhea" id="RHEA-COMP:9928"/>
        <dbReference type="Rhea" id="RHEA-COMP:10000"/>
        <dbReference type="Rhea" id="RHEA-COMP:10001"/>
        <dbReference type="Rhea" id="RHEA-COMP:10475"/>
        <dbReference type="Rhea" id="RHEA-COMP:14568"/>
        <dbReference type="Rhea" id="RHEA-COMP:14569"/>
        <dbReference type="ChEBI" id="CHEBI:15378"/>
        <dbReference type="ChEBI" id="CHEBI:17319"/>
        <dbReference type="ChEBI" id="CHEBI:29034"/>
        <dbReference type="ChEBI" id="CHEBI:29919"/>
        <dbReference type="ChEBI" id="CHEBI:33722"/>
        <dbReference type="ChEBI" id="CHEBI:33737"/>
        <dbReference type="ChEBI" id="CHEBI:33738"/>
        <dbReference type="ChEBI" id="CHEBI:57844"/>
        <dbReference type="ChEBI" id="CHEBI:59789"/>
        <dbReference type="ChEBI" id="CHEBI:78809"/>
        <dbReference type="ChEBI" id="CHEBI:83100"/>
        <dbReference type="EC" id="2.8.1.8"/>
    </reaction>
</comment>
<comment type="cofactor">
    <cofactor evidence="1">
        <name>[4Fe-4S] cluster</name>
        <dbReference type="ChEBI" id="CHEBI:49883"/>
    </cofactor>
    <text evidence="1">Binds 2 [4Fe-4S] clusters per subunit. One cluster is coordinated with 3 cysteines and an exchangeable S-adenosyl-L-methionine.</text>
</comment>
<comment type="pathway">
    <text evidence="1">Protein modification; protein lipoylation via endogenous pathway; protein N(6)-(lipoyl)lysine from octanoyl-[acyl-carrier-protein]: step 2/2.</text>
</comment>
<comment type="subcellular location">
    <subcellularLocation>
        <location evidence="1">Cytoplasm</location>
    </subcellularLocation>
</comment>
<comment type="similarity">
    <text evidence="1">Belongs to the radical SAM superfamily. Lipoyl synthase family.</text>
</comment>
<dbReference type="EC" id="2.8.1.8" evidence="1"/>
<dbReference type="EMBL" id="CP001048">
    <property type="protein sequence ID" value="ACC88124.1"/>
    <property type="molecule type" value="Genomic_DNA"/>
</dbReference>
<dbReference type="RefSeq" id="WP_002210320.1">
    <property type="nucleotide sequence ID" value="NZ_CP009780.1"/>
</dbReference>
<dbReference type="SMR" id="B2K874"/>
<dbReference type="GeneID" id="96664611"/>
<dbReference type="KEGG" id="ypb:YPTS_1148"/>
<dbReference type="PATRIC" id="fig|502801.10.peg.494"/>
<dbReference type="UniPathway" id="UPA00538">
    <property type="reaction ID" value="UER00593"/>
</dbReference>
<dbReference type="GO" id="GO:0005737">
    <property type="term" value="C:cytoplasm"/>
    <property type="evidence" value="ECO:0007669"/>
    <property type="project" value="UniProtKB-SubCell"/>
</dbReference>
<dbReference type="GO" id="GO:0051539">
    <property type="term" value="F:4 iron, 4 sulfur cluster binding"/>
    <property type="evidence" value="ECO:0007669"/>
    <property type="project" value="UniProtKB-UniRule"/>
</dbReference>
<dbReference type="GO" id="GO:0016992">
    <property type="term" value="F:lipoate synthase activity"/>
    <property type="evidence" value="ECO:0007669"/>
    <property type="project" value="UniProtKB-UniRule"/>
</dbReference>
<dbReference type="GO" id="GO:0046872">
    <property type="term" value="F:metal ion binding"/>
    <property type="evidence" value="ECO:0007669"/>
    <property type="project" value="UniProtKB-KW"/>
</dbReference>
<dbReference type="CDD" id="cd01335">
    <property type="entry name" value="Radical_SAM"/>
    <property type="match status" value="1"/>
</dbReference>
<dbReference type="FunFam" id="3.20.20.70:FF:000023">
    <property type="entry name" value="Lipoyl synthase"/>
    <property type="match status" value="1"/>
</dbReference>
<dbReference type="Gene3D" id="3.20.20.70">
    <property type="entry name" value="Aldolase class I"/>
    <property type="match status" value="1"/>
</dbReference>
<dbReference type="HAMAP" id="MF_00206">
    <property type="entry name" value="Lipoyl_synth"/>
    <property type="match status" value="1"/>
</dbReference>
<dbReference type="InterPro" id="IPR013785">
    <property type="entry name" value="Aldolase_TIM"/>
</dbReference>
<dbReference type="InterPro" id="IPR006638">
    <property type="entry name" value="Elp3/MiaA/NifB-like_rSAM"/>
</dbReference>
<dbReference type="InterPro" id="IPR031691">
    <property type="entry name" value="LIAS_N"/>
</dbReference>
<dbReference type="InterPro" id="IPR003698">
    <property type="entry name" value="Lipoyl_synth"/>
</dbReference>
<dbReference type="InterPro" id="IPR007197">
    <property type="entry name" value="rSAM"/>
</dbReference>
<dbReference type="NCBIfam" id="TIGR00510">
    <property type="entry name" value="lipA"/>
    <property type="match status" value="1"/>
</dbReference>
<dbReference type="NCBIfam" id="NF004019">
    <property type="entry name" value="PRK05481.1"/>
    <property type="match status" value="1"/>
</dbReference>
<dbReference type="NCBIfam" id="NF009544">
    <property type="entry name" value="PRK12928.1"/>
    <property type="match status" value="1"/>
</dbReference>
<dbReference type="PANTHER" id="PTHR10949">
    <property type="entry name" value="LIPOYL SYNTHASE"/>
    <property type="match status" value="1"/>
</dbReference>
<dbReference type="PANTHER" id="PTHR10949:SF0">
    <property type="entry name" value="LIPOYL SYNTHASE, MITOCHONDRIAL"/>
    <property type="match status" value="1"/>
</dbReference>
<dbReference type="Pfam" id="PF16881">
    <property type="entry name" value="LIAS_N"/>
    <property type="match status" value="1"/>
</dbReference>
<dbReference type="Pfam" id="PF04055">
    <property type="entry name" value="Radical_SAM"/>
    <property type="match status" value="1"/>
</dbReference>
<dbReference type="PIRSF" id="PIRSF005963">
    <property type="entry name" value="Lipoyl_synth"/>
    <property type="match status" value="1"/>
</dbReference>
<dbReference type="SFLD" id="SFLDF00271">
    <property type="entry name" value="lipoyl_synthase"/>
    <property type="match status" value="1"/>
</dbReference>
<dbReference type="SFLD" id="SFLDG01058">
    <property type="entry name" value="lipoyl_synthase_like"/>
    <property type="match status" value="1"/>
</dbReference>
<dbReference type="SMART" id="SM00729">
    <property type="entry name" value="Elp3"/>
    <property type="match status" value="1"/>
</dbReference>
<dbReference type="SUPFAM" id="SSF102114">
    <property type="entry name" value="Radical SAM enzymes"/>
    <property type="match status" value="1"/>
</dbReference>
<dbReference type="PROSITE" id="PS51918">
    <property type="entry name" value="RADICAL_SAM"/>
    <property type="match status" value="1"/>
</dbReference>
<proteinExistence type="inferred from homology"/>
<reference key="1">
    <citation type="submission" date="2008-04" db="EMBL/GenBank/DDBJ databases">
        <title>Complete sequence of Yersinia pseudotuberculosis PB1/+.</title>
        <authorList>
            <person name="Copeland A."/>
            <person name="Lucas S."/>
            <person name="Lapidus A."/>
            <person name="Glavina del Rio T."/>
            <person name="Dalin E."/>
            <person name="Tice H."/>
            <person name="Bruce D."/>
            <person name="Goodwin L."/>
            <person name="Pitluck S."/>
            <person name="Munk A.C."/>
            <person name="Brettin T."/>
            <person name="Detter J.C."/>
            <person name="Han C."/>
            <person name="Tapia R."/>
            <person name="Schmutz J."/>
            <person name="Larimer F."/>
            <person name="Land M."/>
            <person name="Hauser L."/>
            <person name="Challacombe J.F."/>
            <person name="Green L."/>
            <person name="Lindler L.E."/>
            <person name="Nikolich M.P."/>
            <person name="Richardson P."/>
        </authorList>
    </citation>
    <scope>NUCLEOTIDE SEQUENCE [LARGE SCALE GENOMIC DNA]</scope>
    <source>
        <strain>PB1/+</strain>
    </source>
</reference>
<protein>
    <recommendedName>
        <fullName evidence="1">Lipoyl synthase</fullName>
        <ecNumber evidence="1">2.8.1.8</ecNumber>
    </recommendedName>
    <alternativeName>
        <fullName evidence="1">Lip-syn</fullName>
        <shortName evidence="1">LS</shortName>
    </alternativeName>
    <alternativeName>
        <fullName evidence="1">Lipoate synthase</fullName>
    </alternativeName>
    <alternativeName>
        <fullName evidence="1">Lipoic acid synthase</fullName>
    </alternativeName>
    <alternativeName>
        <fullName evidence="1">Sulfur insertion protein LipA</fullName>
    </alternativeName>
</protein>
<gene>
    <name evidence="1" type="primary">lipA</name>
    <name type="ordered locus">YPTS_1148</name>
</gene>
<keyword id="KW-0004">4Fe-4S</keyword>
<keyword id="KW-0963">Cytoplasm</keyword>
<keyword id="KW-0408">Iron</keyword>
<keyword id="KW-0411">Iron-sulfur</keyword>
<keyword id="KW-0479">Metal-binding</keyword>
<keyword id="KW-0949">S-adenosyl-L-methionine</keyword>
<keyword id="KW-0808">Transferase</keyword>